<keyword id="KW-0028">Amino-acid biosynthesis</keyword>
<keyword id="KW-0057">Aromatic amino acid biosynthesis</keyword>
<keyword id="KW-0456">Lyase</keyword>
<keyword id="KW-1185">Reference proteome</keyword>
<keyword id="KW-0704">Schiff base</keyword>
<organism>
    <name type="scientific">Clostridium novyi (strain NT)</name>
    <dbReference type="NCBI Taxonomy" id="386415"/>
    <lineage>
        <taxon>Bacteria</taxon>
        <taxon>Bacillati</taxon>
        <taxon>Bacillota</taxon>
        <taxon>Clostridia</taxon>
        <taxon>Eubacteriales</taxon>
        <taxon>Clostridiaceae</taxon>
        <taxon>Clostridium</taxon>
    </lineage>
</organism>
<proteinExistence type="inferred from homology"/>
<gene>
    <name evidence="1" type="primary">aroD</name>
    <name type="ordered locus">NT01CX_1316</name>
</gene>
<dbReference type="EC" id="4.2.1.10" evidence="1"/>
<dbReference type="EMBL" id="CP000382">
    <property type="protein sequence ID" value="ABK61917.1"/>
    <property type="molecule type" value="Genomic_DNA"/>
</dbReference>
<dbReference type="RefSeq" id="WP_011721407.1">
    <property type="nucleotide sequence ID" value="NC_008593.1"/>
</dbReference>
<dbReference type="SMR" id="A0PYE7"/>
<dbReference type="STRING" id="386415.NT01CX_1316"/>
<dbReference type="KEGG" id="cno:NT01CX_1316"/>
<dbReference type="eggNOG" id="COG0710">
    <property type="taxonomic scope" value="Bacteria"/>
</dbReference>
<dbReference type="HOGENOM" id="CLU_064444_0_0_9"/>
<dbReference type="UniPathway" id="UPA00053">
    <property type="reaction ID" value="UER00086"/>
</dbReference>
<dbReference type="Proteomes" id="UP000008220">
    <property type="component" value="Chromosome"/>
</dbReference>
<dbReference type="GO" id="GO:0003855">
    <property type="term" value="F:3-dehydroquinate dehydratase activity"/>
    <property type="evidence" value="ECO:0007669"/>
    <property type="project" value="UniProtKB-UniRule"/>
</dbReference>
<dbReference type="GO" id="GO:0046279">
    <property type="term" value="P:3,4-dihydroxybenzoate biosynthetic process"/>
    <property type="evidence" value="ECO:0007669"/>
    <property type="project" value="UniProtKB-ARBA"/>
</dbReference>
<dbReference type="GO" id="GO:0008652">
    <property type="term" value="P:amino acid biosynthetic process"/>
    <property type="evidence" value="ECO:0007669"/>
    <property type="project" value="UniProtKB-KW"/>
</dbReference>
<dbReference type="GO" id="GO:0009073">
    <property type="term" value="P:aromatic amino acid family biosynthetic process"/>
    <property type="evidence" value="ECO:0007669"/>
    <property type="project" value="UniProtKB-KW"/>
</dbReference>
<dbReference type="GO" id="GO:0009423">
    <property type="term" value="P:chorismate biosynthetic process"/>
    <property type="evidence" value="ECO:0007669"/>
    <property type="project" value="UniProtKB-UniRule"/>
</dbReference>
<dbReference type="CDD" id="cd00502">
    <property type="entry name" value="DHQase_I"/>
    <property type="match status" value="1"/>
</dbReference>
<dbReference type="FunFam" id="3.20.20.70:FF:000047">
    <property type="entry name" value="3-dehydroquinate dehydratase"/>
    <property type="match status" value="1"/>
</dbReference>
<dbReference type="Gene3D" id="3.20.20.70">
    <property type="entry name" value="Aldolase class I"/>
    <property type="match status" value="1"/>
</dbReference>
<dbReference type="HAMAP" id="MF_00214">
    <property type="entry name" value="AroD"/>
    <property type="match status" value="1"/>
</dbReference>
<dbReference type="InterPro" id="IPR018508">
    <property type="entry name" value="3-dehydroquinate_DH_AS"/>
</dbReference>
<dbReference type="InterPro" id="IPR013785">
    <property type="entry name" value="Aldolase_TIM"/>
</dbReference>
<dbReference type="InterPro" id="IPR001381">
    <property type="entry name" value="DHquinase_I"/>
</dbReference>
<dbReference type="InterPro" id="IPR050146">
    <property type="entry name" value="Type-I_3-dehydroquinase"/>
</dbReference>
<dbReference type="NCBIfam" id="TIGR01093">
    <property type="entry name" value="aroD"/>
    <property type="match status" value="1"/>
</dbReference>
<dbReference type="PANTHER" id="PTHR43699">
    <property type="entry name" value="3-DEHYDROQUINATE DEHYDRATASE"/>
    <property type="match status" value="1"/>
</dbReference>
<dbReference type="PANTHER" id="PTHR43699:SF1">
    <property type="entry name" value="3-DEHYDROQUINATE DEHYDRATASE"/>
    <property type="match status" value="1"/>
</dbReference>
<dbReference type="Pfam" id="PF01487">
    <property type="entry name" value="DHquinase_I"/>
    <property type="match status" value="1"/>
</dbReference>
<dbReference type="SUPFAM" id="SSF51569">
    <property type="entry name" value="Aldolase"/>
    <property type="match status" value="1"/>
</dbReference>
<dbReference type="PROSITE" id="PS01028">
    <property type="entry name" value="DEHYDROQUINASE_I"/>
    <property type="match status" value="1"/>
</dbReference>
<sequence length="253" mass="28470">MKTVNIRGVILGEGIPKVCTPLVGRSLKELREEINLLKDIDCDLVEFRADFFEHVENIQKVKEVLLEIREALKEKPILFTFRSAKEGGEREVESEFYCKLNKEIIKTKLIDAIDIELFNEEESILELIKIAHDEDVKVVMSNHDFHKTPPKEEMISRLVKMQELGADVTKIAVMPKGSSDVLTLLEATNDMKIKYAKTPFITMSMKGVGMISRISGEVFGSAVTFGASKKASAPGQLQVKELKEILNVVHNVL</sequence>
<accession>A0PYE7</accession>
<feature type="chain" id="PRO_1000043161" description="3-dehydroquinate dehydratase">
    <location>
        <begin position="1"/>
        <end position="253"/>
    </location>
</feature>
<feature type="active site" description="Proton donor/acceptor" evidence="1">
    <location>
        <position position="143"/>
    </location>
</feature>
<feature type="active site" description="Schiff-base intermediate with substrate" evidence="1">
    <location>
        <position position="170"/>
    </location>
</feature>
<feature type="binding site" evidence="1">
    <location>
        <begin position="46"/>
        <end position="48"/>
    </location>
    <ligand>
        <name>3-dehydroquinate</name>
        <dbReference type="ChEBI" id="CHEBI:32364"/>
    </ligand>
</feature>
<feature type="binding site" evidence="1">
    <location>
        <position position="82"/>
    </location>
    <ligand>
        <name>3-dehydroquinate</name>
        <dbReference type="ChEBI" id="CHEBI:32364"/>
    </ligand>
</feature>
<feature type="binding site" evidence="1">
    <location>
        <position position="213"/>
    </location>
    <ligand>
        <name>3-dehydroquinate</name>
        <dbReference type="ChEBI" id="CHEBI:32364"/>
    </ligand>
</feature>
<feature type="binding site" evidence="1">
    <location>
        <position position="232"/>
    </location>
    <ligand>
        <name>3-dehydroquinate</name>
        <dbReference type="ChEBI" id="CHEBI:32364"/>
    </ligand>
</feature>
<feature type="binding site" evidence="1">
    <location>
        <position position="236"/>
    </location>
    <ligand>
        <name>3-dehydroquinate</name>
        <dbReference type="ChEBI" id="CHEBI:32364"/>
    </ligand>
</feature>
<reference key="1">
    <citation type="journal article" date="2006" name="Nat. Biotechnol.">
        <title>The genome and transcriptomes of the anti-tumor agent Clostridium novyi-NT.</title>
        <authorList>
            <person name="Bettegowda C."/>
            <person name="Huang X."/>
            <person name="Lin J."/>
            <person name="Cheong I."/>
            <person name="Kohli M."/>
            <person name="Szabo S.A."/>
            <person name="Zhang X."/>
            <person name="Diaz L.A. Jr."/>
            <person name="Velculescu V.E."/>
            <person name="Parmigiani G."/>
            <person name="Kinzler K.W."/>
            <person name="Vogelstein B."/>
            <person name="Zhou S."/>
        </authorList>
    </citation>
    <scope>NUCLEOTIDE SEQUENCE [LARGE SCALE GENOMIC DNA]</scope>
    <source>
        <strain>NT</strain>
    </source>
</reference>
<name>AROD_CLONN</name>
<protein>
    <recommendedName>
        <fullName evidence="1">3-dehydroquinate dehydratase</fullName>
        <shortName evidence="1">3-dehydroquinase</shortName>
        <ecNumber evidence="1">4.2.1.10</ecNumber>
    </recommendedName>
    <alternativeName>
        <fullName evidence="1">Type I DHQase</fullName>
    </alternativeName>
    <alternativeName>
        <fullName evidence="1">Type I dehydroquinase</fullName>
        <shortName evidence="1">DHQ1</shortName>
    </alternativeName>
</protein>
<evidence type="ECO:0000255" key="1">
    <source>
        <dbReference type="HAMAP-Rule" id="MF_00214"/>
    </source>
</evidence>
<comment type="function">
    <text evidence="1">Involved in the third step of the chorismate pathway, which leads to the biosynthesis of aromatic amino acids. Catalyzes the cis-dehydration of 3-dehydroquinate (DHQ) and introduces the first double bond of the aromatic ring to yield 3-dehydroshikimate.</text>
</comment>
<comment type="catalytic activity">
    <reaction evidence="1">
        <text>3-dehydroquinate = 3-dehydroshikimate + H2O</text>
        <dbReference type="Rhea" id="RHEA:21096"/>
        <dbReference type="ChEBI" id="CHEBI:15377"/>
        <dbReference type="ChEBI" id="CHEBI:16630"/>
        <dbReference type="ChEBI" id="CHEBI:32364"/>
        <dbReference type="EC" id="4.2.1.10"/>
    </reaction>
</comment>
<comment type="pathway">
    <text evidence="1">Metabolic intermediate biosynthesis; chorismate biosynthesis; chorismate from D-erythrose 4-phosphate and phosphoenolpyruvate: step 3/7.</text>
</comment>
<comment type="subunit">
    <text evidence="1">Homodimer.</text>
</comment>
<comment type="similarity">
    <text evidence="1">Belongs to the type-I 3-dehydroquinase family.</text>
</comment>